<proteinExistence type="predicted"/>
<reference key="1">
    <citation type="journal article" date="2001" name="Proc. Natl. Acad. Sci. U.S.A.">
        <title>The complete genome of the crenarchaeon Sulfolobus solfataricus P2.</title>
        <authorList>
            <person name="She Q."/>
            <person name="Singh R.K."/>
            <person name="Confalonieri F."/>
            <person name="Zivanovic Y."/>
            <person name="Allard G."/>
            <person name="Awayez M.J."/>
            <person name="Chan-Weiher C.C.-Y."/>
            <person name="Clausen I.G."/>
            <person name="Curtis B.A."/>
            <person name="De Moors A."/>
            <person name="Erauso G."/>
            <person name="Fletcher C."/>
            <person name="Gordon P.M.K."/>
            <person name="Heikamp-de Jong I."/>
            <person name="Jeffries A.C."/>
            <person name="Kozera C.J."/>
            <person name="Medina N."/>
            <person name="Peng X."/>
            <person name="Thi-Ngoc H.P."/>
            <person name="Redder P."/>
            <person name="Schenk M.E."/>
            <person name="Theriault C."/>
            <person name="Tolstrup N."/>
            <person name="Charlebois R.L."/>
            <person name="Doolittle W.F."/>
            <person name="Duguet M."/>
            <person name="Gaasterland T."/>
            <person name="Garrett R.A."/>
            <person name="Ragan M.A."/>
            <person name="Sensen C.W."/>
            <person name="Van der Oost J."/>
        </authorList>
    </citation>
    <scope>NUCLEOTIDE SEQUENCE [LARGE SCALE GENOMIC DNA]</scope>
    <source>
        <strain>ATCC 35092 / DSM 1617 / JCM 11322 / P2</strain>
    </source>
</reference>
<sequence length="111" mass="13123">MMSEVKFNAYSKAIMEFEDEIKRIKKEIADDSKRLITLSDSYLSELRATAEKSLGDVQKLLNDEKKRQLDEIRNKYISEREKQLEEIRKEAEKNIDKVVNEVIRQLLGVFK</sequence>
<organism>
    <name type="scientific">Saccharolobus solfataricus (strain ATCC 35092 / DSM 1617 / JCM 11322 / P2)</name>
    <name type="common">Sulfolobus solfataricus</name>
    <dbReference type="NCBI Taxonomy" id="273057"/>
    <lineage>
        <taxon>Archaea</taxon>
        <taxon>Thermoproteota</taxon>
        <taxon>Thermoprotei</taxon>
        <taxon>Sulfolobales</taxon>
        <taxon>Sulfolobaceae</taxon>
        <taxon>Saccharolobus</taxon>
    </lineage>
</organism>
<feature type="chain" id="PRO_0000206881" description="Uncharacterized protein SSO0428">
    <location>
        <begin position="1"/>
        <end position="111"/>
    </location>
</feature>
<protein>
    <recommendedName>
        <fullName>Uncharacterized protein SSO0428</fullName>
    </recommendedName>
</protein>
<accession>Q9Y8K9</accession>
<name>Y428_SACS2</name>
<gene>
    <name type="ordered locus">SSO0428</name>
    <name type="ORF">C41_039</name>
</gene>
<dbReference type="EMBL" id="AJ243289">
    <property type="protein sequence ID" value="CAB46015.1"/>
    <property type="molecule type" value="Genomic_DNA"/>
</dbReference>
<dbReference type="EMBL" id="AE006641">
    <property type="protein sequence ID" value="AAK40753.1"/>
    <property type="molecule type" value="Genomic_DNA"/>
</dbReference>
<dbReference type="PIR" id="B90187">
    <property type="entry name" value="B90187"/>
</dbReference>
<dbReference type="SMR" id="Q9Y8K9"/>
<dbReference type="STRING" id="273057.SSO0428"/>
<dbReference type="PaxDb" id="273057-SSO0428"/>
<dbReference type="EnsemblBacteria" id="AAK40753">
    <property type="protein sequence ID" value="AAK40753"/>
    <property type="gene ID" value="SSO0428"/>
</dbReference>
<dbReference type="KEGG" id="sso:SSO0428"/>
<dbReference type="PATRIC" id="fig|273057.12.peg.420"/>
<dbReference type="eggNOG" id="arCOG05939">
    <property type="taxonomic scope" value="Archaea"/>
</dbReference>
<dbReference type="HOGENOM" id="CLU_172986_0_0_2"/>
<dbReference type="InParanoid" id="Q9Y8K9"/>
<dbReference type="Proteomes" id="UP000001974">
    <property type="component" value="Chromosome"/>
</dbReference>
<dbReference type="Gene3D" id="1.20.5.2950">
    <property type="match status" value="1"/>
</dbReference>
<keyword id="KW-1185">Reference proteome</keyword>